<gene>
    <name evidence="2" type="primary">rbpA</name>
    <name type="ordered locus">MSMEG_3858</name>
    <name type="ordered locus">MSMEI_3768</name>
</gene>
<protein>
    <recommendedName>
        <fullName evidence="2">RNA polymerase-binding protein RbpA</fullName>
    </recommendedName>
</protein>
<evidence type="ECO:0000250" key="1"/>
<evidence type="ECO:0000255" key="2">
    <source>
        <dbReference type="HAMAP-Rule" id="MF_01483"/>
    </source>
</evidence>
<evidence type="ECO:0000269" key="3">
    <source>
    </source>
</evidence>
<evidence type="ECO:0000269" key="4">
    <source>
    </source>
</evidence>
<evidence type="ECO:0000305" key="5"/>
<evidence type="ECO:0007829" key="6">
    <source>
        <dbReference type="PDB" id="5TW1"/>
    </source>
</evidence>
<evidence type="ECO:0007829" key="7">
    <source>
        <dbReference type="PDB" id="6VVT"/>
    </source>
</evidence>
<evidence type="ECO:0007829" key="8">
    <source>
        <dbReference type="PDB" id="6VVV"/>
    </source>
</evidence>
<evidence type="ECO:0007829" key="9">
    <source>
        <dbReference type="PDB" id="8R6P"/>
    </source>
</evidence>
<sequence length="114" mass="13057">MADRVLRGSRLGAVSYETDRNHDLAPRQVARYRTDNGEEFDVPFADDAEIPGTWLCRNGLEGTLIEGDVPEPKKVKPPRTHWDMLLERRSVEELEELLKERLDLIKAKRRGTGS</sequence>
<keyword id="KW-0002">3D-structure</keyword>
<keyword id="KW-0046">Antibiotic resistance</keyword>
<keyword id="KW-0903">Direct protein sequencing</keyword>
<keyword id="KW-1185">Reference proteome</keyword>
<keyword id="KW-0804">Transcription</keyword>
<keyword id="KW-0805">Transcription regulation</keyword>
<proteinExistence type="evidence at protein level"/>
<name>RBPA_MYCS2</name>
<comment type="function">
    <text evidence="1 3 4">Binds to RNA polymerase (RNAP), probably stimulating transcriptions from principal, but not alternative sigma factor promoters (By similarity). Partially restores transcription in the presence of rifampicin (Rif) in vitro; overexpression leads to an increase in the Rif tolerance in vivo, with smaller colonies. Seems to act by removing Rif from its binding site and preventing its further binding. No longer stimulates transcription in Rif-resistant RNA polymerase (with mutations in rpoB).</text>
</comment>
<comment type="subunit">
    <text>Monomer. Forms a complex with the RNAP catalytic core, specifically with the beta subunit (RpoB); its binding site may overlap with that of Rif. May bind free principal sigma factors.</text>
</comment>
<comment type="induction">
    <text evidence="3">Constitutively expressed during growth, increases slightly in stationary phase (at protein level).</text>
</comment>
<comment type="similarity">
    <text evidence="2">Belongs to the RNA polymerase-binding protein RbpA family.</text>
</comment>
<comment type="sequence caution" evidence="5">
    <conflict type="erroneous initiation">
        <sequence resource="EMBL-CDS" id="ABK74095"/>
    </conflict>
    <text>Extended N-terminus.</text>
</comment>
<dbReference type="EMBL" id="HQ203032">
    <property type="protein sequence ID" value="ADV91011.1"/>
    <property type="molecule type" value="Genomic_DNA"/>
</dbReference>
<dbReference type="EMBL" id="CP000480">
    <property type="protein sequence ID" value="ABK74095.1"/>
    <property type="status" value="ALT_INIT"/>
    <property type="molecule type" value="Genomic_DNA"/>
</dbReference>
<dbReference type="EMBL" id="CP001663">
    <property type="protein sequence ID" value="AFP40226.1"/>
    <property type="molecule type" value="Genomic_DNA"/>
</dbReference>
<dbReference type="RefSeq" id="WP_003895305.1">
    <property type="nucleotide sequence ID" value="NZ_SIJM01000005.1"/>
</dbReference>
<dbReference type="RefSeq" id="YP_888149.1">
    <property type="nucleotide sequence ID" value="NC_008596.1"/>
</dbReference>
<dbReference type="PDB" id="5TW1">
    <property type="method" value="X-ray"/>
    <property type="resolution" value="2.76 A"/>
    <property type="chains" value="J=1-114"/>
</dbReference>
<dbReference type="PDB" id="5VI5">
    <property type="method" value="X-ray"/>
    <property type="resolution" value="3.20 A"/>
    <property type="chains" value="J=1-114"/>
</dbReference>
<dbReference type="PDB" id="5VI8">
    <property type="method" value="X-ray"/>
    <property type="resolution" value="2.76 A"/>
    <property type="chains" value="J=1-114"/>
</dbReference>
<dbReference type="PDB" id="6CCE">
    <property type="method" value="X-ray"/>
    <property type="resolution" value="3.05 A"/>
    <property type="chains" value="J=1-114"/>
</dbReference>
<dbReference type="PDB" id="6CCV">
    <property type="method" value="X-ray"/>
    <property type="resolution" value="3.05 A"/>
    <property type="chains" value="J=1-114"/>
</dbReference>
<dbReference type="PDB" id="6DCF">
    <property type="method" value="X-ray"/>
    <property type="resolution" value="3.45 A"/>
    <property type="chains" value="J=1-114"/>
</dbReference>
<dbReference type="PDB" id="6VVS">
    <property type="method" value="X-ray"/>
    <property type="resolution" value="3.11 A"/>
    <property type="chains" value="J=1-114"/>
</dbReference>
<dbReference type="PDB" id="6VVT">
    <property type="method" value="X-ray"/>
    <property type="resolution" value="2.90 A"/>
    <property type="chains" value="J=1-114"/>
</dbReference>
<dbReference type="PDB" id="6VVV">
    <property type="method" value="X-ray"/>
    <property type="resolution" value="3.20 A"/>
    <property type="chains" value="J=1-114"/>
</dbReference>
<dbReference type="PDB" id="7P5X">
    <property type="method" value="EM"/>
    <property type="resolution" value="3.20 A"/>
    <property type="chains" value="AJ=1-114"/>
</dbReference>
<dbReference type="PDB" id="8Q3I">
    <property type="method" value="EM"/>
    <property type="resolution" value="3.11 A"/>
    <property type="chains" value="J=1-114"/>
</dbReference>
<dbReference type="PDB" id="8QN8">
    <property type="method" value="EM"/>
    <property type="resolution" value="3.14 A"/>
    <property type="chains" value="J=1-114"/>
</dbReference>
<dbReference type="PDB" id="8QTI">
    <property type="method" value="EM"/>
    <property type="resolution" value="3.09 A"/>
    <property type="chains" value="J=1-114"/>
</dbReference>
<dbReference type="PDB" id="8QU6">
    <property type="method" value="EM"/>
    <property type="resolution" value="3.45 A"/>
    <property type="chains" value="J=1-114"/>
</dbReference>
<dbReference type="PDB" id="8R2M">
    <property type="method" value="EM"/>
    <property type="resolution" value="3.44 A"/>
    <property type="chains" value="J=1-114"/>
</dbReference>
<dbReference type="PDB" id="8R3M">
    <property type="method" value="EM"/>
    <property type="resolution" value="3.49 A"/>
    <property type="chains" value="J=1-114"/>
</dbReference>
<dbReference type="PDB" id="8R6P">
    <property type="method" value="EM"/>
    <property type="resolution" value="3.16 A"/>
    <property type="chains" value="J=1-114"/>
</dbReference>
<dbReference type="PDB" id="8R6R">
    <property type="method" value="EM"/>
    <property type="resolution" value="3.89 A"/>
    <property type="chains" value="J=1-114"/>
</dbReference>
<dbReference type="PDB" id="9FNE">
    <property type="method" value="EM"/>
    <property type="resolution" value="4.00 A"/>
    <property type="chains" value="J=1-114"/>
</dbReference>
<dbReference type="PDBsum" id="5TW1"/>
<dbReference type="PDBsum" id="5VI5"/>
<dbReference type="PDBsum" id="5VI8"/>
<dbReference type="PDBsum" id="6CCE"/>
<dbReference type="PDBsum" id="6CCV"/>
<dbReference type="PDBsum" id="6DCF"/>
<dbReference type="PDBsum" id="6VVS"/>
<dbReference type="PDBsum" id="6VVT"/>
<dbReference type="PDBsum" id="6VVV"/>
<dbReference type="PDBsum" id="7P5X"/>
<dbReference type="PDBsum" id="8Q3I"/>
<dbReference type="PDBsum" id="8QN8"/>
<dbReference type="PDBsum" id="8QTI"/>
<dbReference type="PDBsum" id="8QU6"/>
<dbReference type="PDBsum" id="8R2M"/>
<dbReference type="PDBsum" id="8R3M"/>
<dbReference type="PDBsum" id="8R6P"/>
<dbReference type="PDBsum" id="8R6R"/>
<dbReference type="PDBsum" id="9FNE"/>
<dbReference type="EMDB" id="EMD-13205"/>
<dbReference type="EMDB" id="EMD-18128"/>
<dbReference type="EMDB" id="EMD-18511"/>
<dbReference type="EMDB" id="EMD-18650"/>
<dbReference type="EMDB" id="EMD-18656"/>
<dbReference type="EMDB" id="EMD-18851"/>
<dbReference type="EMDB" id="EMD-18873"/>
<dbReference type="EMDB" id="EMD-18956"/>
<dbReference type="EMDB" id="EMD-18959"/>
<dbReference type="EMDB" id="EMD-50589"/>
<dbReference type="EMDB" id="EMD-50591"/>
<dbReference type="SMR" id="A0QZ11"/>
<dbReference type="STRING" id="246196.MSMEG_3858"/>
<dbReference type="CARD" id="ARO:3000245">
    <property type="molecule name" value="RbpA"/>
    <property type="mechanism identifier" value="ARO:0001003"/>
    <property type="mechanism name" value="antibiotic target protection"/>
</dbReference>
<dbReference type="PaxDb" id="246196-MSMEI_3768"/>
<dbReference type="GeneID" id="93458597"/>
<dbReference type="KEGG" id="msb:LJ00_19160"/>
<dbReference type="KEGG" id="msg:MSMEI_3768"/>
<dbReference type="KEGG" id="msm:MSMEG_3858"/>
<dbReference type="PATRIC" id="fig|246196.19.peg.3797"/>
<dbReference type="eggNOG" id="ENOG5032SI2">
    <property type="taxonomic scope" value="Bacteria"/>
</dbReference>
<dbReference type="OrthoDB" id="3618415at2"/>
<dbReference type="Proteomes" id="UP000000757">
    <property type="component" value="Chromosome"/>
</dbReference>
<dbReference type="Proteomes" id="UP000006158">
    <property type="component" value="Chromosome"/>
</dbReference>
<dbReference type="GO" id="GO:0001000">
    <property type="term" value="F:bacterial-type RNA polymerase core enzyme binding"/>
    <property type="evidence" value="ECO:0000314"/>
    <property type="project" value="UniProtKB"/>
</dbReference>
<dbReference type="GO" id="GO:0045893">
    <property type="term" value="P:positive regulation of DNA-templated transcription"/>
    <property type="evidence" value="ECO:0007669"/>
    <property type="project" value="UniProtKB-UniRule"/>
</dbReference>
<dbReference type="GO" id="GO:0046677">
    <property type="term" value="P:response to antibiotic"/>
    <property type="evidence" value="ECO:0000314"/>
    <property type="project" value="UniProtKB"/>
</dbReference>
<dbReference type="FunFam" id="2.20.28.270:FF:000001">
    <property type="entry name" value="RNA polymerase-binding protein RbpA"/>
    <property type="match status" value="1"/>
</dbReference>
<dbReference type="Gene3D" id="2.20.28.270">
    <property type="entry name" value="RNA polymerase-binding protein A"/>
    <property type="match status" value="1"/>
</dbReference>
<dbReference type="HAMAP" id="MF_01483">
    <property type="entry name" value="RbpA"/>
    <property type="match status" value="1"/>
</dbReference>
<dbReference type="InterPro" id="IPR038638">
    <property type="entry name" value="RbpA_sf"/>
</dbReference>
<dbReference type="InterPro" id="IPR025182">
    <property type="entry name" value="RNApol-bd_RbpA"/>
</dbReference>
<dbReference type="Pfam" id="PF13397">
    <property type="entry name" value="RbpA"/>
    <property type="match status" value="1"/>
</dbReference>
<reference key="1">
    <citation type="journal article" date="2010" name="Microbiology">
        <title>Role of an RNA polymerase interacting protein, MsRbpA, from Mycobacterium smegmatis in phenotypic tolerance to rifampicin.</title>
        <authorList>
            <person name="Dey A."/>
            <person name="Verma A.K."/>
            <person name="Chatterji D."/>
        </authorList>
    </citation>
    <scope>NUCLEOTIDE SEQUENCE [GENOMIC DNA]</scope>
    <scope>FUNCTION</scope>
    <scope>INTERACTION WITH RNA POLYMERASE</scope>
    <scope>INTERACTION WITH BETA SUBUNIT (RPOB)</scope>
    <scope>ANTIBIOTIC RESISTANCE</scope>
    <scope>INDUCTION</scope>
    <source>
        <strain>ATCC 700084 / mc(2)155</strain>
    </source>
</reference>
<reference key="2">
    <citation type="submission" date="2006-10" db="EMBL/GenBank/DDBJ databases">
        <authorList>
            <person name="Fleischmann R.D."/>
            <person name="Dodson R.J."/>
            <person name="Haft D.H."/>
            <person name="Merkel J.S."/>
            <person name="Nelson W.C."/>
            <person name="Fraser C.M."/>
        </authorList>
    </citation>
    <scope>NUCLEOTIDE SEQUENCE [LARGE SCALE GENOMIC DNA]</scope>
    <source>
        <strain>ATCC 700084 / mc(2)155</strain>
    </source>
</reference>
<reference key="3">
    <citation type="journal article" date="2007" name="Genome Biol.">
        <title>Interrupted coding sequences in Mycobacterium smegmatis: authentic mutations or sequencing errors?</title>
        <authorList>
            <person name="Deshayes C."/>
            <person name="Perrodou E."/>
            <person name="Gallien S."/>
            <person name="Euphrasie D."/>
            <person name="Schaeffer C."/>
            <person name="Van-Dorsselaer A."/>
            <person name="Poch O."/>
            <person name="Lecompte O."/>
            <person name="Reyrat J.-M."/>
        </authorList>
    </citation>
    <scope>NUCLEOTIDE SEQUENCE [LARGE SCALE GENOMIC DNA]</scope>
    <source>
        <strain>ATCC 700084 / mc(2)155</strain>
    </source>
</reference>
<reference key="4">
    <citation type="journal article" date="2009" name="Genome Res.">
        <title>Ortho-proteogenomics: multiple proteomes investigation through orthology and a new MS-based protocol.</title>
        <authorList>
            <person name="Gallien S."/>
            <person name="Perrodou E."/>
            <person name="Carapito C."/>
            <person name="Deshayes C."/>
            <person name="Reyrat J.-M."/>
            <person name="Van Dorsselaer A."/>
            <person name="Poch O."/>
            <person name="Schaeffer C."/>
            <person name="Lecompte O."/>
        </authorList>
    </citation>
    <scope>NUCLEOTIDE SEQUENCE [LARGE SCALE GENOMIC DNA]</scope>
    <source>
        <strain>ATCC 700084 / mc(2)155</strain>
    </source>
</reference>
<reference key="5">
    <citation type="journal article" date="2011" name="Microbiology">
        <title>Molecular insights into the mechanism of phenotypic tolerance to rifampicin conferred on mycobacterial RNA polymerase by MsRbpA.</title>
        <authorList>
            <person name="Dey A."/>
            <person name="Verma A.K."/>
            <person name="Chatterji D."/>
        </authorList>
    </citation>
    <scope>PROTEIN SEQUENCE OF 58-73</scope>
    <scope>INTERACTION WITH RNA POLYMERASE BETA SUBUNIT (RPOB)</scope>
    <scope>FUNCTION</scope>
    <scope>ANTIBIOTIC RESISTANCE</scope>
    <source>
        <strain>ATCC 700084 / mc(2)155</strain>
    </source>
</reference>
<feature type="chain" id="PRO_0000423658" description="RNA polymerase-binding protein RbpA">
    <location>
        <begin position="1"/>
        <end position="114"/>
    </location>
</feature>
<feature type="strand" evidence="9">
    <location>
        <begin position="7"/>
        <end position="9"/>
    </location>
</feature>
<feature type="strand" evidence="9">
    <location>
        <begin position="11"/>
        <end position="13"/>
    </location>
</feature>
<feature type="strand" evidence="9">
    <location>
        <begin position="21"/>
        <end position="23"/>
    </location>
</feature>
<feature type="strand" evidence="6">
    <location>
        <begin position="27"/>
        <end position="34"/>
    </location>
</feature>
<feature type="strand" evidence="6">
    <location>
        <begin position="39"/>
        <end position="45"/>
    </location>
</feature>
<feature type="strand" evidence="7">
    <location>
        <begin position="46"/>
        <end position="48"/>
    </location>
</feature>
<feature type="strand" evidence="7">
    <location>
        <begin position="52"/>
        <end position="55"/>
    </location>
</feature>
<feature type="strand" evidence="6">
    <location>
        <begin position="62"/>
        <end position="67"/>
    </location>
</feature>
<feature type="helix" evidence="6">
    <location>
        <begin position="81"/>
        <end position="86"/>
    </location>
</feature>
<feature type="helix" evidence="6">
    <location>
        <begin position="91"/>
        <end position="106"/>
    </location>
</feature>
<feature type="turn" evidence="8">
    <location>
        <begin position="109"/>
        <end position="111"/>
    </location>
</feature>
<organism>
    <name type="scientific">Mycolicibacterium smegmatis (strain ATCC 700084 / mc(2)155)</name>
    <name type="common">Mycobacterium smegmatis</name>
    <dbReference type="NCBI Taxonomy" id="246196"/>
    <lineage>
        <taxon>Bacteria</taxon>
        <taxon>Bacillati</taxon>
        <taxon>Actinomycetota</taxon>
        <taxon>Actinomycetes</taxon>
        <taxon>Mycobacteriales</taxon>
        <taxon>Mycobacteriaceae</taxon>
        <taxon>Mycolicibacterium</taxon>
    </lineage>
</organism>
<accession>A0QZ11</accession>
<accession>E9M4Y7</accession>